<evidence type="ECO:0000255" key="1">
    <source>
        <dbReference type="HAMAP-Rule" id="MF_01023"/>
    </source>
</evidence>
<feature type="chain" id="PRO_0000319767" description="Histidinol-phosphate aminotransferase">
    <location>
        <begin position="1"/>
        <end position="356"/>
    </location>
</feature>
<feature type="modified residue" description="N6-(pyridoxal phosphate)lysine" evidence="1">
    <location>
        <position position="208"/>
    </location>
</feature>
<comment type="catalytic activity">
    <reaction evidence="1">
        <text>L-histidinol phosphate + 2-oxoglutarate = 3-(imidazol-4-yl)-2-oxopropyl phosphate + L-glutamate</text>
        <dbReference type="Rhea" id="RHEA:23744"/>
        <dbReference type="ChEBI" id="CHEBI:16810"/>
        <dbReference type="ChEBI" id="CHEBI:29985"/>
        <dbReference type="ChEBI" id="CHEBI:57766"/>
        <dbReference type="ChEBI" id="CHEBI:57980"/>
        <dbReference type="EC" id="2.6.1.9"/>
    </reaction>
</comment>
<comment type="cofactor">
    <cofactor evidence="1">
        <name>pyridoxal 5'-phosphate</name>
        <dbReference type="ChEBI" id="CHEBI:597326"/>
    </cofactor>
</comment>
<comment type="pathway">
    <text evidence="1">Amino-acid biosynthesis; L-histidine biosynthesis; L-histidine from 5-phospho-alpha-D-ribose 1-diphosphate: step 7/9.</text>
</comment>
<comment type="subunit">
    <text evidence="1">Homodimer.</text>
</comment>
<comment type="similarity">
    <text evidence="1">Belongs to the class-II pyridoxal-phosphate-dependent aminotransferase family. Histidinol-phosphate aminotransferase subfamily.</text>
</comment>
<proteinExistence type="inferred from homology"/>
<protein>
    <recommendedName>
        <fullName evidence="1">Histidinol-phosphate aminotransferase</fullName>
        <ecNumber evidence="1">2.6.1.9</ecNumber>
    </recommendedName>
    <alternativeName>
        <fullName evidence="1">Imidazole acetol-phosphate transaminase</fullName>
    </alternativeName>
</protein>
<gene>
    <name evidence="1" type="primary">hisC</name>
    <name type="ordered locus">LACR_1336</name>
</gene>
<sequence>MSWQNNLHSVSPYIAGEQPELTDMIKLNTNENPYQPSLQVQKVIEDFKSENLRLYPSTDAKFLRKALAEYHHLNTDQVFIGNGSDEVLSLSFLTFFNGQRAILMPDISYSFYPIYCELYRIPYQKIPLADDFSLSVNSYFQENGGIVIANPNAPTGMAISLQEIEEILQNNQDSIVLIDEAYIDFGGESCLPLLEKFDNLVVVQTFSKSRSLAGIRLGIAFGSAEAIAHLYDVKNSFNSYPIDSLAQKIGEASFTDETYFQKSVSKIITTRENFKNELIKLGFQVTDSKTNFVFVHHPKIDATTLFKVLYEAKIIVRHWNQARISDWLRITIGTDREMNTVIQFLKEYLKNKEKSY</sequence>
<keyword id="KW-0028">Amino-acid biosynthesis</keyword>
<keyword id="KW-0032">Aminotransferase</keyword>
<keyword id="KW-0368">Histidine biosynthesis</keyword>
<keyword id="KW-0663">Pyridoxal phosphate</keyword>
<keyword id="KW-0808">Transferase</keyword>
<dbReference type="EC" id="2.6.1.9" evidence="1"/>
<dbReference type="EMBL" id="CP000425">
    <property type="protein sequence ID" value="ABJ72859.1"/>
    <property type="molecule type" value="Genomic_DNA"/>
</dbReference>
<dbReference type="RefSeq" id="WP_011676154.1">
    <property type="nucleotide sequence ID" value="NC_008527.1"/>
</dbReference>
<dbReference type="SMR" id="Q02YW3"/>
<dbReference type="KEGG" id="llc:LACR_1336"/>
<dbReference type="HOGENOM" id="CLU_017584_3_0_9"/>
<dbReference type="UniPathway" id="UPA00031">
    <property type="reaction ID" value="UER00012"/>
</dbReference>
<dbReference type="Proteomes" id="UP000000240">
    <property type="component" value="Chromosome"/>
</dbReference>
<dbReference type="GO" id="GO:0004400">
    <property type="term" value="F:histidinol-phosphate transaminase activity"/>
    <property type="evidence" value="ECO:0007669"/>
    <property type="project" value="UniProtKB-UniRule"/>
</dbReference>
<dbReference type="GO" id="GO:0030170">
    <property type="term" value="F:pyridoxal phosphate binding"/>
    <property type="evidence" value="ECO:0007669"/>
    <property type="project" value="InterPro"/>
</dbReference>
<dbReference type="GO" id="GO:0000105">
    <property type="term" value="P:L-histidine biosynthetic process"/>
    <property type="evidence" value="ECO:0007669"/>
    <property type="project" value="UniProtKB-UniRule"/>
</dbReference>
<dbReference type="CDD" id="cd00609">
    <property type="entry name" value="AAT_like"/>
    <property type="match status" value="1"/>
</dbReference>
<dbReference type="Gene3D" id="3.90.1150.10">
    <property type="entry name" value="Aspartate Aminotransferase, domain 1"/>
    <property type="match status" value="1"/>
</dbReference>
<dbReference type="Gene3D" id="3.40.640.10">
    <property type="entry name" value="Type I PLP-dependent aspartate aminotransferase-like (Major domain)"/>
    <property type="match status" value="1"/>
</dbReference>
<dbReference type="HAMAP" id="MF_01023">
    <property type="entry name" value="HisC_aminotrans_2"/>
    <property type="match status" value="1"/>
</dbReference>
<dbReference type="InterPro" id="IPR001917">
    <property type="entry name" value="Aminotrans_II_pyridoxalP_BS"/>
</dbReference>
<dbReference type="InterPro" id="IPR004839">
    <property type="entry name" value="Aminotransferase_I/II_large"/>
</dbReference>
<dbReference type="InterPro" id="IPR005861">
    <property type="entry name" value="HisP_aminotrans"/>
</dbReference>
<dbReference type="InterPro" id="IPR050106">
    <property type="entry name" value="HistidinolP_aminotransfase"/>
</dbReference>
<dbReference type="InterPro" id="IPR015424">
    <property type="entry name" value="PyrdxlP-dep_Trfase"/>
</dbReference>
<dbReference type="InterPro" id="IPR015421">
    <property type="entry name" value="PyrdxlP-dep_Trfase_major"/>
</dbReference>
<dbReference type="InterPro" id="IPR015422">
    <property type="entry name" value="PyrdxlP-dep_Trfase_small"/>
</dbReference>
<dbReference type="NCBIfam" id="TIGR01141">
    <property type="entry name" value="hisC"/>
    <property type="match status" value="1"/>
</dbReference>
<dbReference type="PANTHER" id="PTHR43643:SF3">
    <property type="entry name" value="HISTIDINOL-PHOSPHATE AMINOTRANSFERASE"/>
    <property type="match status" value="1"/>
</dbReference>
<dbReference type="PANTHER" id="PTHR43643">
    <property type="entry name" value="HISTIDINOL-PHOSPHATE AMINOTRANSFERASE 2"/>
    <property type="match status" value="1"/>
</dbReference>
<dbReference type="Pfam" id="PF00155">
    <property type="entry name" value="Aminotran_1_2"/>
    <property type="match status" value="1"/>
</dbReference>
<dbReference type="SUPFAM" id="SSF53383">
    <property type="entry name" value="PLP-dependent transferases"/>
    <property type="match status" value="1"/>
</dbReference>
<dbReference type="PROSITE" id="PS00599">
    <property type="entry name" value="AA_TRANSFER_CLASS_2"/>
    <property type="match status" value="1"/>
</dbReference>
<reference key="1">
    <citation type="journal article" date="2006" name="Proc. Natl. Acad. Sci. U.S.A.">
        <title>Comparative genomics of the lactic acid bacteria.</title>
        <authorList>
            <person name="Makarova K.S."/>
            <person name="Slesarev A."/>
            <person name="Wolf Y.I."/>
            <person name="Sorokin A."/>
            <person name="Mirkin B."/>
            <person name="Koonin E.V."/>
            <person name="Pavlov A."/>
            <person name="Pavlova N."/>
            <person name="Karamychev V."/>
            <person name="Polouchine N."/>
            <person name="Shakhova V."/>
            <person name="Grigoriev I."/>
            <person name="Lou Y."/>
            <person name="Rohksar D."/>
            <person name="Lucas S."/>
            <person name="Huang K."/>
            <person name="Goodstein D.M."/>
            <person name="Hawkins T."/>
            <person name="Plengvidhya V."/>
            <person name="Welker D."/>
            <person name="Hughes J."/>
            <person name="Goh Y."/>
            <person name="Benson A."/>
            <person name="Baldwin K."/>
            <person name="Lee J.-H."/>
            <person name="Diaz-Muniz I."/>
            <person name="Dosti B."/>
            <person name="Smeianov V."/>
            <person name="Wechter W."/>
            <person name="Barabote R."/>
            <person name="Lorca G."/>
            <person name="Altermann E."/>
            <person name="Barrangou R."/>
            <person name="Ganesan B."/>
            <person name="Xie Y."/>
            <person name="Rawsthorne H."/>
            <person name="Tamir D."/>
            <person name="Parker C."/>
            <person name="Breidt F."/>
            <person name="Broadbent J.R."/>
            <person name="Hutkins R."/>
            <person name="O'Sullivan D."/>
            <person name="Steele J."/>
            <person name="Unlu G."/>
            <person name="Saier M.H. Jr."/>
            <person name="Klaenhammer T."/>
            <person name="Richardson P."/>
            <person name="Kozyavkin S."/>
            <person name="Weimer B.C."/>
            <person name="Mills D.A."/>
        </authorList>
    </citation>
    <scope>NUCLEOTIDE SEQUENCE [LARGE SCALE GENOMIC DNA]</scope>
    <source>
        <strain>SK11</strain>
    </source>
</reference>
<organism>
    <name type="scientific">Lactococcus lactis subsp. cremoris (strain SK11)</name>
    <dbReference type="NCBI Taxonomy" id="272622"/>
    <lineage>
        <taxon>Bacteria</taxon>
        <taxon>Bacillati</taxon>
        <taxon>Bacillota</taxon>
        <taxon>Bacilli</taxon>
        <taxon>Lactobacillales</taxon>
        <taxon>Streptococcaceae</taxon>
        <taxon>Lactococcus</taxon>
        <taxon>Lactococcus cremoris subsp. cremoris</taxon>
    </lineage>
</organism>
<name>HIS8_LACLS</name>
<accession>Q02YW3</accession>